<accession>Q3A526</accession>
<feature type="chain" id="PRO_0000255771" description="Bifunctional protein HldE">
    <location>
        <begin position="1"/>
        <end position="490"/>
    </location>
</feature>
<feature type="region of interest" description="Ribokinase">
    <location>
        <begin position="1"/>
        <end position="330"/>
    </location>
</feature>
<feature type="region of interest" description="Cytidylyltransferase">
    <location>
        <begin position="356"/>
        <end position="490"/>
    </location>
</feature>
<feature type="active site" evidence="1">
    <location>
        <position position="275"/>
    </location>
</feature>
<feature type="binding site" evidence="1">
    <location>
        <begin position="205"/>
        <end position="208"/>
    </location>
    <ligand>
        <name>ATP</name>
        <dbReference type="ChEBI" id="CHEBI:30616"/>
    </ligand>
</feature>
<comment type="function">
    <text evidence="1">Catalyzes the phosphorylation of D-glycero-D-manno-heptose 7-phosphate at the C-1 position to selectively form D-glycero-beta-D-manno-heptose-1,7-bisphosphate.</text>
</comment>
<comment type="function">
    <text evidence="1">Catalyzes the ADP transfer from ATP to D-glycero-beta-D-manno-heptose 1-phosphate, yielding ADP-D-glycero-beta-D-manno-heptose.</text>
</comment>
<comment type="catalytic activity">
    <reaction evidence="1">
        <text>D-glycero-beta-D-manno-heptose 7-phosphate + ATP = D-glycero-beta-D-manno-heptose 1,7-bisphosphate + ADP + H(+)</text>
        <dbReference type="Rhea" id="RHEA:27473"/>
        <dbReference type="ChEBI" id="CHEBI:15378"/>
        <dbReference type="ChEBI" id="CHEBI:30616"/>
        <dbReference type="ChEBI" id="CHEBI:60204"/>
        <dbReference type="ChEBI" id="CHEBI:60208"/>
        <dbReference type="ChEBI" id="CHEBI:456216"/>
        <dbReference type="EC" id="2.7.1.167"/>
    </reaction>
</comment>
<comment type="catalytic activity">
    <reaction evidence="1">
        <text>D-glycero-beta-D-manno-heptose 1-phosphate + ATP + H(+) = ADP-D-glycero-beta-D-manno-heptose + diphosphate</text>
        <dbReference type="Rhea" id="RHEA:27465"/>
        <dbReference type="ChEBI" id="CHEBI:15378"/>
        <dbReference type="ChEBI" id="CHEBI:30616"/>
        <dbReference type="ChEBI" id="CHEBI:33019"/>
        <dbReference type="ChEBI" id="CHEBI:59967"/>
        <dbReference type="ChEBI" id="CHEBI:61593"/>
        <dbReference type="EC" id="2.7.7.70"/>
    </reaction>
</comment>
<comment type="pathway">
    <text evidence="1">Nucleotide-sugar biosynthesis; ADP-L-glycero-beta-D-manno-heptose biosynthesis; ADP-L-glycero-beta-D-manno-heptose from D-glycero-beta-D-manno-heptose 7-phosphate: step 1/4.</text>
</comment>
<comment type="pathway">
    <text evidence="1">Nucleotide-sugar biosynthesis; ADP-L-glycero-beta-D-manno-heptose biosynthesis; ADP-L-glycero-beta-D-manno-heptose from D-glycero-beta-D-manno-heptose 7-phosphate: step 3/4.</text>
</comment>
<comment type="subunit">
    <text evidence="1">Homodimer.</text>
</comment>
<comment type="similarity">
    <text evidence="1">In the N-terminal section; belongs to the carbohydrate kinase PfkB family.</text>
</comment>
<comment type="similarity">
    <text evidence="1">In the C-terminal section; belongs to the cytidylyltransferase family.</text>
</comment>
<keyword id="KW-0067">ATP-binding</keyword>
<keyword id="KW-0119">Carbohydrate metabolism</keyword>
<keyword id="KW-0418">Kinase</keyword>
<keyword id="KW-0511">Multifunctional enzyme</keyword>
<keyword id="KW-0547">Nucleotide-binding</keyword>
<keyword id="KW-0548">Nucleotidyltransferase</keyword>
<keyword id="KW-1185">Reference proteome</keyword>
<keyword id="KW-0808">Transferase</keyword>
<sequence>MDRTNIENFLSRLKDLRALVIGDLMLDEYLWGRTERISPEAPVQVVDVVREDLRLGGAGNVINNLVTLGCQVHVASVLGEGHDGLLLRRRLEEKQVGIEGLQFDAKRTTSRKTRILASGQQMMRFDRESRCPIDATQEAVLAEFVSNSADRFDVILVSDYLKGVLTEDLLQSVIAVGKQKGIPVVIDPKGNDYAKYRGATLLTPNRKETEVASGISIVDEESLRLAARTLMQRIDLETLMVTRSEEGISIFFRNGEEVHLPTQAREVYDVTGAGDTVLSLVGLGLAGGLPVSEAAALANIGAGIVVGKVGTSTVNVEELHEAMAHHALEYDSKIRLRESLRDVLEVERRRGKTVVFTNGCFDLLHVGHVKYLQKARRLGDLLVLGLNSDASIRRLKGPSRPLISEQERAHILAALSCIDYVVVFDEDTPLELIDTLRPDILVKGGDYTPETVVGKDLVESYGGRVELIDLVDGRSTTNIIERILDRYEQG</sequence>
<reference key="1">
    <citation type="submission" date="2005-10" db="EMBL/GenBank/DDBJ databases">
        <title>Complete sequence of Pelobacter carbinolicus DSM 2380.</title>
        <authorList>
            <person name="Copeland A."/>
            <person name="Lucas S."/>
            <person name="Lapidus A."/>
            <person name="Barry K."/>
            <person name="Detter J.C."/>
            <person name="Glavina T."/>
            <person name="Hammon N."/>
            <person name="Israni S."/>
            <person name="Pitluck S."/>
            <person name="Chertkov O."/>
            <person name="Schmutz J."/>
            <person name="Larimer F."/>
            <person name="Land M."/>
            <person name="Kyrpides N."/>
            <person name="Ivanova N."/>
            <person name="Richardson P."/>
        </authorList>
    </citation>
    <scope>NUCLEOTIDE SEQUENCE [LARGE SCALE GENOMIC DNA]</scope>
    <source>
        <strain>DSM 2380 / NBRC 103641 / GraBd1</strain>
    </source>
</reference>
<organism>
    <name type="scientific">Syntrophotalea carbinolica (strain DSM 2380 / NBRC 103641 / GraBd1)</name>
    <name type="common">Pelobacter carbinolicus</name>
    <dbReference type="NCBI Taxonomy" id="338963"/>
    <lineage>
        <taxon>Bacteria</taxon>
        <taxon>Pseudomonadati</taxon>
        <taxon>Thermodesulfobacteriota</taxon>
        <taxon>Desulfuromonadia</taxon>
        <taxon>Desulfuromonadales</taxon>
        <taxon>Syntrophotaleaceae</taxon>
        <taxon>Syntrophotalea</taxon>
    </lineage>
</organism>
<proteinExistence type="inferred from homology"/>
<gene>
    <name evidence="1" type="primary">hldE</name>
    <name type="ordered locus">Pcar_1282</name>
</gene>
<protein>
    <recommendedName>
        <fullName evidence="1">Bifunctional protein HldE</fullName>
    </recommendedName>
    <domain>
        <recommendedName>
            <fullName evidence="1">D-beta-D-heptose 7-phosphate kinase</fullName>
            <ecNumber evidence="1">2.7.1.167</ecNumber>
        </recommendedName>
        <alternativeName>
            <fullName evidence="1">D-beta-D-heptose 7-phosphotransferase</fullName>
        </alternativeName>
        <alternativeName>
            <fullName evidence="1">D-glycero-beta-D-manno-heptose-7-phosphate kinase</fullName>
        </alternativeName>
    </domain>
    <domain>
        <recommendedName>
            <fullName evidence="1">D-beta-D-heptose 1-phosphate adenylyltransferase</fullName>
            <ecNumber evidence="1">2.7.7.70</ecNumber>
        </recommendedName>
        <alternativeName>
            <fullName evidence="1">D-glycero-beta-D-manno-heptose 1-phosphate adenylyltransferase</fullName>
        </alternativeName>
    </domain>
</protein>
<evidence type="ECO:0000255" key="1">
    <source>
        <dbReference type="HAMAP-Rule" id="MF_01603"/>
    </source>
</evidence>
<dbReference type="EC" id="2.7.1.167" evidence="1"/>
<dbReference type="EC" id="2.7.7.70" evidence="1"/>
<dbReference type="EMBL" id="CP000142">
    <property type="protein sequence ID" value="ABA88531.1"/>
    <property type="molecule type" value="Genomic_DNA"/>
</dbReference>
<dbReference type="RefSeq" id="WP_011341006.1">
    <property type="nucleotide sequence ID" value="NC_007498.2"/>
</dbReference>
<dbReference type="SMR" id="Q3A526"/>
<dbReference type="STRING" id="338963.Pcar_1282"/>
<dbReference type="KEGG" id="pca:Pcar_1282"/>
<dbReference type="eggNOG" id="COG0615">
    <property type="taxonomic scope" value="Bacteria"/>
</dbReference>
<dbReference type="eggNOG" id="COG2870">
    <property type="taxonomic scope" value="Bacteria"/>
</dbReference>
<dbReference type="HOGENOM" id="CLU_021150_2_1_7"/>
<dbReference type="OrthoDB" id="9802794at2"/>
<dbReference type="UniPathway" id="UPA00356">
    <property type="reaction ID" value="UER00437"/>
</dbReference>
<dbReference type="UniPathway" id="UPA00356">
    <property type="reaction ID" value="UER00439"/>
</dbReference>
<dbReference type="Proteomes" id="UP000002534">
    <property type="component" value="Chromosome"/>
</dbReference>
<dbReference type="GO" id="GO:0005829">
    <property type="term" value="C:cytosol"/>
    <property type="evidence" value="ECO:0007669"/>
    <property type="project" value="TreeGrafter"/>
</dbReference>
<dbReference type="GO" id="GO:0005524">
    <property type="term" value="F:ATP binding"/>
    <property type="evidence" value="ECO:0007669"/>
    <property type="project" value="UniProtKB-UniRule"/>
</dbReference>
<dbReference type="GO" id="GO:0033785">
    <property type="term" value="F:heptose 7-phosphate kinase activity"/>
    <property type="evidence" value="ECO:0007669"/>
    <property type="project" value="UniProtKB-UniRule"/>
</dbReference>
<dbReference type="GO" id="GO:0033786">
    <property type="term" value="F:heptose-1-phosphate adenylyltransferase activity"/>
    <property type="evidence" value="ECO:0007669"/>
    <property type="project" value="UniProtKB-UniRule"/>
</dbReference>
<dbReference type="GO" id="GO:0016773">
    <property type="term" value="F:phosphotransferase activity, alcohol group as acceptor"/>
    <property type="evidence" value="ECO:0007669"/>
    <property type="project" value="InterPro"/>
</dbReference>
<dbReference type="GO" id="GO:0097171">
    <property type="term" value="P:ADP-L-glycero-beta-D-manno-heptose biosynthetic process"/>
    <property type="evidence" value="ECO:0007669"/>
    <property type="project" value="UniProtKB-UniPathway"/>
</dbReference>
<dbReference type="CDD" id="cd01172">
    <property type="entry name" value="RfaE_like"/>
    <property type="match status" value="1"/>
</dbReference>
<dbReference type="FunFam" id="3.40.1190.20:FF:000002">
    <property type="entry name" value="Bifunctional protein HldE"/>
    <property type="match status" value="1"/>
</dbReference>
<dbReference type="Gene3D" id="3.40.1190.20">
    <property type="match status" value="1"/>
</dbReference>
<dbReference type="Gene3D" id="3.40.50.620">
    <property type="entry name" value="HUPs"/>
    <property type="match status" value="1"/>
</dbReference>
<dbReference type="HAMAP" id="MF_01603">
    <property type="entry name" value="HldE"/>
    <property type="match status" value="1"/>
</dbReference>
<dbReference type="InterPro" id="IPR023030">
    <property type="entry name" value="Bifunc_HldE"/>
</dbReference>
<dbReference type="InterPro" id="IPR004821">
    <property type="entry name" value="Cyt_trans-like"/>
</dbReference>
<dbReference type="InterPro" id="IPR011611">
    <property type="entry name" value="PfkB_dom"/>
</dbReference>
<dbReference type="InterPro" id="IPR011913">
    <property type="entry name" value="RfaE_dom_I"/>
</dbReference>
<dbReference type="InterPro" id="IPR011914">
    <property type="entry name" value="RfaE_dom_II"/>
</dbReference>
<dbReference type="InterPro" id="IPR029056">
    <property type="entry name" value="Ribokinase-like"/>
</dbReference>
<dbReference type="InterPro" id="IPR014729">
    <property type="entry name" value="Rossmann-like_a/b/a_fold"/>
</dbReference>
<dbReference type="NCBIfam" id="TIGR00125">
    <property type="entry name" value="cyt_tran_rel"/>
    <property type="match status" value="1"/>
</dbReference>
<dbReference type="NCBIfam" id="TIGR02198">
    <property type="entry name" value="rfaE_dom_I"/>
    <property type="match status" value="1"/>
</dbReference>
<dbReference type="NCBIfam" id="TIGR02199">
    <property type="entry name" value="rfaE_dom_II"/>
    <property type="match status" value="1"/>
</dbReference>
<dbReference type="PANTHER" id="PTHR46969">
    <property type="entry name" value="BIFUNCTIONAL PROTEIN HLDE"/>
    <property type="match status" value="1"/>
</dbReference>
<dbReference type="PANTHER" id="PTHR46969:SF1">
    <property type="entry name" value="BIFUNCTIONAL PROTEIN HLDE"/>
    <property type="match status" value="1"/>
</dbReference>
<dbReference type="Pfam" id="PF01467">
    <property type="entry name" value="CTP_transf_like"/>
    <property type="match status" value="1"/>
</dbReference>
<dbReference type="Pfam" id="PF00294">
    <property type="entry name" value="PfkB"/>
    <property type="match status" value="1"/>
</dbReference>
<dbReference type="SUPFAM" id="SSF52374">
    <property type="entry name" value="Nucleotidylyl transferase"/>
    <property type="match status" value="1"/>
</dbReference>
<dbReference type="SUPFAM" id="SSF53613">
    <property type="entry name" value="Ribokinase-like"/>
    <property type="match status" value="1"/>
</dbReference>
<name>HLDE_SYNC1</name>